<keyword id="KW-1185">Reference proteome</keyword>
<reference key="1">
    <citation type="journal article" date="1997" name="Nature">
        <title>The complete genome sequence of the hyperthermophilic, sulphate-reducing archaeon Archaeoglobus fulgidus.</title>
        <authorList>
            <person name="Klenk H.-P."/>
            <person name="Clayton R.A."/>
            <person name="Tomb J.-F."/>
            <person name="White O."/>
            <person name="Nelson K.E."/>
            <person name="Ketchum K.A."/>
            <person name="Dodson R.J."/>
            <person name="Gwinn M.L."/>
            <person name="Hickey E.K."/>
            <person name="Peterson J.D."/>
            <person name="Richardson D.L."/>
            <person name="Kerlavage A.R."/>
            <person name="Graham D.E."/>
            <person name="Kyrpides N.C."/>
            <person name="Fleischmann R.D."/>
            <person name="Quackenbush J."/>
            <person name="Lee N.H."/>
            <person name="Sutton G.G."/>
            <person name="Gill S.R."/>
            <person name="Kirkness E.F."/>
            <person name="Dougherty B.A."/>
            <person name="McKenney K."/>
            <person name="Adams M.D."/>
            <person name="Loftus B.J."/>
            <person name="Peterson S.N."/>
            <person name="Reich C.I."/>
            <person name="McNeil L.K."/>
            <person name="Badger J.H."/>
            <person name="Glodek A."/>
            <person name="Zhou L."/>
            <person name="Overbeek R."/>
            <person name="Gocayne J.D."/>
            <person name="Weidman J.F."/>
            <person name="McDonald L.A."/>
            <person name="Utterback T.R."/>
            <person name="Cotton M.D."/>
            <person name="Spriggs T."/>
            <person name="Artiach P."/>
            <person name="Kaine B.P."/>
            <person name="Sykes S.M."/>
            <person name="Sadow P.W."/>
            <person name="D'Andrea K.P."/>
            <person name="Bowman C."/>
            <person name="Fujii C."/>
            <person name="Garland S.A."/>
            <person name="Mason T.M."/>
            <person name="Olsen G.J."/>
            <person name="Fraser C.M."/>
            <person name="Smith H.O."/>
            <person name="Woese C.R."/>
            <person name="Venter J.C."/>
        </authorList>
    </citation>
    <scope>NUCLEOTIDE SEQUENCE [LARGE SCALE GENOMIC DNA]</scope>
    <source>
        <strain>ATCC 49558 / DSM 4304 / JCM 9628 / NBRC 100126 / VC-16</strain>
    </source>
</reference>
<gene>
    <name type="ordered locus">AF_1844</name>
</gene>
<name>Y1844_ARCFU</name>
<feature type="chain" id="PRO_0000128061" description="Uncharacterized protein AF_1844">
    <location>
        <begin position="1"/>
        <end position="90"/>
    </location>
</feature>
<dbReference type="EMBL" id="AE000782">
    <property type="protein sequence ID" value="AAB89429.1"/>
    <property type="molecule type" value="Genomic_DNA"/>
</dbReference>
<dbReference type="PIR" id="C69480">
    <property type="entry name" value="C69480"/>
</dbReference>
<dbReference type="STRING" id="224325.AF_1844"/>
<dbReference type="PaxDb" id="224325-AF_1844"/>
<dbReference type="EnsemblBacteria" id="AAB89429">
    <property type="protein sequence ID" value="AAB89429"/>
    <property type="gene ID" value="AF_1844"/>
</dbReference>
<dbReference type="KEGG" id="afu:AF_1844"/>
<dbReference type="eggNOG" id="arCOG10356">
    <property type="taxonomic scope" value="Archaea"/>
</dbReference>
<dbReference type="HOGENOM" id="CLU_2433672_0_0_2"/>
<dbReference type="Proteomes" id="UP000002199">
    <property type="component" value="Chromosome"/>
</dbReference>
<sequence length="90" mass="9937">MERYPGSVMLEYMTVTAGGVNTVQITYGTEDSGNSVFQWYVNKLKSEGWEVMTSTSEGQYFVGGSKGSSYIQVEITEEAFTKISVTYTSS</sequence>
<proteinExistence type="predicted"/>
<protein>
    <recommendedName>
        <fullName>Uncharacterized protein AF_1844</fullName>
    </recommendedName>
</protein>
<organism>
    <name type="scientific">Archaeoglobus fulgidus (strain ATCC 49558 / DSM 4304 / JCM 9628 / NBRC 100126 / VC-16)</name>
    <dbReference type="NCBI Taxonomy" id="224325"/>
    <lineage>
        <taxon>Archaea</taxon>
        <taxon>Methanobacteriati</taxon>
        <taxon>Methanobacteriota</taxon>
        <taxon>Archaeoglobi</taxon>
        <taxon>Archaeoglobales</taxon>
        <taxon>Archaeoglobaceae</taxon>
        <taxon>Archaeoglobus</taxon>
    </lineage>
</organism>
<accession>O28434</accession>